<reference key="1">
    <citation type="journal article" date="2005" name="Nature">
        <title>The map-based sequence of the rice genome.</title>
        <authorList>
            <consortium name="International rice genome sequencing project (IRGSP)"/>
        </authorList>
    </citation>
    <scope>NUCLEOTIDE SEQUENCE [LARGE SCALE GENOMIC DNA]</scope>
    <source>
        <strain>cv. Nipponbare</strain>
    </source>
</reference>
<reference key="2">
    <citation type="journal article" date="2008" name="Nucleic Acids Res.">
        <title>The rice annotation project database (RAP-DB): 2008 update.</title>
        <authorList>
            <consortium name="The rice annotation project (RAP)"/>
        </authorList>
    </citation>
    <scope>GENOME REANNOTATION</scope>
    <source>
        <strain>cv. Nipponbare</strain>
    </source>
</reference>
<reference key="3">
    <citation type="journal article" date="2013" name="Rice">
        <title>Improvement of the Oryza sativa Nipponbare reference genome using next generation sequence and optical map data.</title>
        <authorList>
            <person name="Kawahara Y."/>
            <person name="de la Bastide M."/>
            <person name="Hamilton J.P."/>
            <person name="Kanamori H."/>
            <person name="McCombie W.R."/>
            <person name="Ouyang S."/>
            <person name="Schwartz D.C."/>
            <person name="Tanaka T."/>
            <person name="Wu J."/>
            <person name="Zhou S."/>
            <person name="Childs K.L."/>
            <person name="Davidson R.M."/>
            <person name="Lin H."/>
            <person name="Quesada-Ocampo L."/>
            <person name="Vaillancourt B."/>
            <person name="Sakai H."/>
            <person name="Lee S.S."/>
            <person name="Kim J."/>
            <person name="Numa H."/>
            <person name="Itoh T."/>
            <person name="Buell C.R."/>
            <person name="Matsumoto T."/>
        </authorList>
    </citation>
    <scope>GENOME REANNOTATION</scope>
    <source>
        <strain>cv. Nipponbare</strain>
    </source>
</reference>
<reference key="4">
    <citation type="journal article" date="2003" name="Science">
        <title>Collection, mapping, and annotation of over 28,000 cDNA clones from japonica rice.</title>
        <authorList>
            <consortium name="The rice full-length cDNA consortium"/>
        </authorList>
    </citation>
    <scope>NUCLEOTIDE SEQUENCE [LARGE SCALE MRNA]</scope>
    <source>
        <strain>cv. Nipponbare</strain>
    </source>
</reference>
<reference key="5">
    <citation type="journal article" date="2010" name="Proc. Natl. Acad. Sci. U.S.A.">
        <title>Structural basis for the one-pot formation of the diarylheptanoid scaffold by curcuminoid synthase from Oryza sativa.</title>
        <authorList>
            <person name="Morita H."/>
            <person name="Wanibuchi K."/>
            <person name="Nii H."/>
            <person name="Kato R."/>
            <person name="Sugio S."/>
            <person name="Abe I."/>
        </authorList>
    </citation>
    <scope>X-RAY CRYSTALLOGRAPHY (2.50 ANGSTROMS)</scope>
    <scope>FUNCTION</scope>
    <scope>SUBUNIT</scope>
    <scope>MUTAGENESIS OF TYR-207; MET-265 AND GLY-274</scope>
</reference>
<reference key="6">
    <citation type="journal article" date="2011" name="Proteins">
        <title>Crystal structure of curcuminoid synthase CUS from Oryza sativa.</title>
        <authorList>
            <person name="Miyazono K."/>
            <person name="Um J."/>
            <person name="Imai F.L."/>
            <person name="Katsuyama Y."/>
            <person name="Ohnishi Y."/>
            <person name="Horinouchi S."/>
            <person name="Tanokura M."/>
        </authorList>
    </citation>
    <scope>X-RAY CRYSTALLOGRAPHY (2.00 ANGSTROMS) OF 17-400</scope>
    <scope>SUBUNIT</scope>
</reference>
<dbReference type="EC" id="2.3.1.211"/>
<dbReference type="EMBL" id="AP003797">
    <property type="protein sequence ID" value="BAC79571.1"/>
    <property type="molecule type" value="Genomic_DNA"/>
</dbReference>
<dbReference type="EMBL" id="AP005172">
    <property type="protein sequence ID" value="BAD31021.1"/>
    <property type="molecule type" value="Genomic_DNA"/>
</dbReference>
<dbReference type="EMBL" id="AP008213">
    <property type="protein sequence ID" value="BAF21259.1"/>
    <property type="molecule type" value="Genomic_DNA"/>
</dbReference>
<dbReference type="EMBL" id="AP014963">
    <property type="protein sequence ID" value="BAT00940.1"/>
    <property type="molecule type" value="Genomic_DNA"/>
</dbReference>
<dbReference type="EMBL" id="AK109558">
    <property type="status" value="NOT_ANNOTATED_CDS"/>
    <property type="molecule type" value="mRNA"/>
</dbReference>
<dbReference type="RefSeq" id="XP_015646196.1">
    <property type="nucleotide sequence ID" value="XM_015790710.1"/>
</dbReference>
<dbReference type="PDB" id="3ALE">
    <property type="method" value="X-ray"/>
    <property type="resolution" value="2.50 A"/>
    <property type="chains" value="A/B/C/D=1-402"/>
</dbReference>
<dbReference type="PDB" id="3OIT">
    <property type="method" value="X-ray"/>
    <property type="resolution" value="2.00 A"/>
    <property type="chains" value="A/B=17-400"/>
</dbReference>
<dbReference type="PDBsum" id="3ALE"/>
<dbReference type="PDBsum" id="3OIT"/>
<dbReference type="SMR" id="Q8LIL0"/>
<dbReference type="DIP" id="DIP-59476N"/>
<dbReference type="FunCoup" id="Q8LIL0">
    <property type="interactions" value="34"/>
</dbReference>
<dbReference type="STRING" id="39947.Q8LIL0"/>
<dbReference type="PaxDb" id="39947-Q8LIL0"/>
<dbReference type="EnsemblPlants" id="Os07t0271500-01">
    <property type="protein sequence ID" value="Os07t0271500-01"/>
    <property type="gene ID" value="Os07g0271500"/>
</dbReference>
<dbReference type="Gramene" id="Os07t0271500-01">
    <property type="protein sequence ID" value="Os07t0271500-01"/>
    <property type="gene ID" value="Os07g0271500"/>
</dbReference>
<dbReference type="KEGG" id="dosa:Os07g0271500"/>
<dbReference type="eggNOG" id="ENOG502QRSY">
    <property type="taxonomic scope" value="Eukaryota"/>
</dbReference>
<dbReference type="HOGENOM" id="CLU_034992_2_0_1"/>
<dbReference type="InParanoid" id="Q8LIL0"/>
<dbReference type="OMA" id="MAFGPGM"/>
<dbReference type="OrthoDB" id="640820at2759"/>
<dbReference type="BioCyc" id="MetaCyc:MONOMER-16869"/>
<dbReference type="BRENDA" id="2.3.1.211">
    <property type="organism ID" value="4460"/>
</dbReference>
<dbReference type="BRENDA" id="2.3.1.217">
    <property type="organism ID" value="8948"/>
</dbReference>
<dbReference type="UniPathway" id="UPA00154"/>
<dbReference type="EvolutionaryTrace" id="Q8LIL0"/>
<dbReference type="Proteomes" id="UP000000763">
    <property type="component" value="Chromosome 7"/>
</dbReference>
<dbReference type="Proteomes" id="UP000059680">
    <property type="component" value="Chromosome 7"/>
</dbReference>
<dbReference type="GO" id="GO:0016747">
    <property type="term" value="F:acyltransferase activity, transferring groups other than amino-acyl groups"/>
    <property type="evidence" value="ECO:0000318"/>
    <property type="project" value="GO_Central"/>
</dbReference>
<dbReference type="GO" id="GO:0102452">
    <property type="term" value="F:bisdemethoxycurcumin synthase activity"/>
    <property type="evidence" value="ECO:0007669"/>
    <property type="project" value="UniProtKB-EC"/>
</dbReference>
<dbReference type="GO" id="GO:0042802">
    <property type="term" value="F:identical protein binding"/>
    <property type="evidence" value="ECO:0000353"/>
    <property type="project" value="UniProtKB"/>
</dbReference>
<dbReference type="GO" id="GO:0009813">
    <property type="term" value="P:flavonoid biosynthetic process"/>
    <property type="evidence" value="ECO:0000314"/>
    <property type="project" value="UniProtKB"/>
</dbReference>
<dbReference type="GO" id="GO:0030639">
    <property type="term" value="P:polyketide biosynthetic process"/>
    <property type="evidence" value="ECO:0000318"/>
    <property type="project" value="GO_Central"/>
</dbReference>
<dbReference type="CDD" id="cd00831">
    <property type="entry name" value="CHS_like"/>
    <property type="match status" value="1"/>
</dbReference>
<dbReference type="FunFam" id="3.40.47.10:FF:000104">
    <property type="entry name" value="Bisdemethoxycurcumin synthase"/>
    <property type="match status" value="1"/>
</dbReference>
<dbReference type="FunFam" id="3.40.47.10:FF:000025">
    <property type="entry name" value="Chalcone synthase 2"/>
    <property type="match status" value="1"/>
</dbReference>
<dbReference type="Gene3D" id="3.40.47.10">
    <property type="match status" value="2"/>
</dbReference>
<dbReference type="InterPro" id="IPR012328">
    <property type="entry name" value="Chalcone/stilbene_synt_C"/>
</dbReference>
<dbReference type="InterPro" id="IPR001099">
    <property type="entry name" value="Chalcone/stilbene_synt_N"/>
</dbReference>
<dbReference type="InterPro" id="IPR011141">
    <property type="entry name" value="Polyketide_synthase_type-III"/>
</dbReference>
<dbReference type="InterPro" id="IPR016039">
    <property type="entry name" value="Thiolase-like"/>
</dbReference>
<dbReference type="PANTHER" id="PTHR11877:SF106">
    <property type="entry name" value="BISDEMETHOXYCURCUMIN SYNTHASE"/>
    <property type="match status" value="1"/>
</dbReference>
<dbReference type="PANTHER" id="PTHR11877">
    <property type="entry name" value="HYDROXYMETHYLGLUTARYL-COA SYNTHASE"/>
    <property type="match status" value="1"/>
</dbReference>
<dbReference type="Pfam" id="PF02797">
    <property type="entry name" value="Chal_sti_synt_C"/>
    <property type="match status" value="1"/>
</dbReference>
<dbReference type="Pfam" id="PF00195">
    <property type="entry name" value="Chal_sti_synt_N"/>
    <property type="match status" value="1"/>
</dbReference>
<dbReference type="PIRSF" id="PIRSF000451">
    <property type="entry name" value="PKS_III"/>
    <property type="match status" value="1"/>
</dbReference>
<dbReference type="SUPFAM" id="SSF53901">
    <property type="entry name" value="Thiolase-like"/>
    <property type="match status" value="2"/>
</dbReference>
<sequence length="402" mass="43212">MAPTTTMGSALYPLGEMRRSQRADGLAAVLAIGTANPPNCVTQEEFPDFYFRVTNSDHLTALKDKFKRICQEMGVQRRYLHHTEEMLSAHPEFVDRDAPSLDARLDIAADAVPELAAEAAKKAIAEWGRPAADITHLVVTTNSGAHVPGVDFRLVPLLGLRPSVRRTMLHLNGCFAGCAALRLAKDLAENSRGARVLVVAAELTLMYFTGPDEGCFRTLLVQGLFGDGAAAVIVGADADDVERPLFEIVSAAQTIIPESDHALNMRFTERRLDGVLGRQVPGLIGDNVERCLLDMFGPLLGGDGGGGWNDLFWAVHPGSSTIMDQVDAALGLEPGKLAASRRVLSDYGNMSGATVIFALDELRRQRKEAAAAGEWPELGVMMAFGPGMTVDAMLLHATSHVN</sequence>
<proteinExistence type="evidence at protein level"/>
<gene>
    <name type="ordered locus">Os07g0271500</name>
    <name type="ordered locus">LOC_Os07g17010</name>
    <name type="ORF">OJ1001_C01.122</name>
    <name type="ORF">OSJNBb0002J01.6</name>
</gene>
<organism>
    <name type="scientific">Oryza sativa subsp. japonica</name>
    <name type="common">Rice</name>
    <dbReference type="NCBI Taxonomy" id="39947"/>
    <lineage>
        <taxon>Eukaryota</taxon>
        <taxon>Viridiplantae</taxon>
        <taxon>Streptophyta</taxon>
        <taxon>Embryophyta</taxon>
        <taxon>Tracheophyta</taxon>
        <taxon>Spermatophyta</taxon>
        <taxon>Magnoliopsida</taxon>
        <taxon>Liliopsida</taxon>
        <taxon>Poales</taxon>
        <taxon>Poaceae</taxon>
        <taxon>BOP clade</taxon>
        <taxon>Oryzoideae</taxon>
        <taxon>Oryzeae</taxon>
        <taxon>Oryzinae</taxon>
        <taxon>Oryza</taxon>
        <taxon>Oryza sativa</taxon>
    </lineage>
</organism>
<comment type="function">
    <text evidence="1">Plant-specific type III polyketide synthase (PKS) that catalyzes the one-pot formation of the C6-C7-C6 diarylheptanoid scaffold of bisdemethoxycurcumin by the condensation of two molecules of 4-coumaroyl-CoA and one molecule of malonyl-CoA.</text>
</comment>
<comment type="catalytic activity">
    <reaction>
        <text>2 4-coumaroyl-CoA + malonyl-CoA + H2O + H(+) = bisdemethoxycurcumin + 2 CO2 + 3 CoA</text>
        <dbReference type="Rhea" id="RHEA:34803"/>
        <dbReference type="ChEBI" id="CHEBI:15377"/>
        <dbReference type="ChEBI" id="CHEBI:15378"/>
        <dbReference type="ChEBI" id="CHEBI:16526"/>
        <dbReference type="ChEBI" id="CHEBI:57287"/>
        <dbReference type="ChEBI" id="CHEBI:57355"/>
        <dbReference type="ChEBI" id="CHEBI:57384"/>
        <dbReference type="ChEBI" id="CHEBI:71045"/>
        <dbReference type="EC" id="2.3.1.211"/>
    </reaction>
</comment>
<comment type="pathway">
    <text>Secondary metabolite biosynthesis; flavonoid biosynthesis.</text>
</comment>
<comment type="subunit">
    <text evidence="1 2">Homodimer.</text>
</comment>
<comment type="similarity">
    <text evidence="3">Belongs to the thiolase-like superfamily. Chalcone/stilbene synthases family.</text>
</comment>
<accession>Q8LIL0</accession>
<accession>A0A0P0X4L6</accession>
<keyword id="KW-0002">3D-structure</keyword>
<keyword id="KW-0012">Acyltransferase</keyword>
<keyword id="KW-0284">Flavonoid biosynthesis</keyword>
<keyword id="KW-1185">Reference proteome</keyword>
<keyword id="KW-0808">Transferase</keyword>
<protein>
    <recommendedName>
        <fullName>Bisdemethoxycurcumin synthase</fullName>
        <ecNumber>2.3.1.211</ecNumber>
    </recommendedName>
    <alternativeName>
        <fullName>Curcuminoid synthase</fullName>
    </alternativeName>
</protein>
<evidence type="ECO:0000269" key="1">
    <source>
    </source>
</evidence>
<evidence type="ECO:0000269" key="2">
    <source>
    </source>
</evidence>
<evidence type="ECO:0000305" key="3"/>
<evidence type="ECO:0007829" key="4">
    <source>
        <dbReference type="PDB" id="3OIT"/>
    </source>
</evidence>
<name>CUS_ORYSJ</name>
<feature type="chain" id="PRO_0000407328" description="Bisdemethoxycurcumin synthase">
    <location>
        <begin position="1"/>
        <end position="402"/>
    </location>
</feature>
<feature type="active site" description="Acyl-thioester intermediate" evidence="3">
    <location>
        <position position="174"/>
    </location>
</feature>
<feature type="mutagenesis site" description="Loss the bisdemethoxycurcumin-forming activity and formation of bisnoryangonin." evidence="1">
    <original>Y</original>
    <variation>F</variation>
    <location>
        <position position="207"/>
    </location>
</feature>
<feature type="mutagenesis site" description="Loss of the bisdemethoxycurcumin-forming activity and formation of bisnoryangonin." evidence="1">
    <original>M</original>
    <variation>L</variation>
    <location>
        <position position="265"/>
    </location>
</feature>
<feature type="mutagenesis site" description="Loss of the bisdemethoxycurcumin-forming activity and formation of bisnoryangonin." evidence="1">
    <original>G</original>
    <variation>F</variation>
    <location>
        <position position="274"/>
    </location>
</feature>
<feature type="sequence conflict" description="In Ref. 4; AK109558." evidence="3" ref="4">
    <original>F</original>
    <variation>I</variation>
    <location>
        <position position="46"/>
    </location>
</feature>
<feature type="strand" evidence="4">
    <location>
        <begin position="28"/>
        <end position="35"/>
    </location>
</feature>
<feature type="strand" evidence="4">
    <location>
        <begin position="38"/>
        <end position="42"/>
    </location>
</feature>
<feature type="turn" evidence="4">
    <location>
        <begin position="43"/>
        <end position="45"/>
    </location>
</feature>
<feature type="helix" evidence="4">
    <location>
        <begin position="46"/>
        <end position="53"/>
    </location>
</feature>
<feature type="helix" evidence="4">
    <location>
        <begin position="60"/>
        <end position="71"/>
    </location>
</feature>
<feature type="strand" evidence="4">
    <location>
        <begin position="77"/>
        <end position="81"/>
    </location>
</feature>
<feature type="helix" evidence="4">
    <location>
        <begin position="84"/>
        <end position="89"/>
    </location>
</feature>
<feature type="helix" evidence="4">
    <location>
        <begin position="91"/>
        <end position="93"/>
    </location>
</feature>
<feature type="helix" evidence="4">
    <location>
        <begin position="101"/>
        <end position="127"/>
    </location>
</feature>
<feature type="helix" evidence="4">
    <location>
        <begin position="131"/>
        <end position="133"/>
    </location>
</feature>
<feature type="strand" evidence="4">
    <location>
        <begin position="136"/>
        <end position="143"/>
    </location>
</feature>
<feature type="strand" evidence="4">
    <location>
        <begin position="146"/>
        <end position="148"/>
    </location>
</feature>
<feature type="helix" evidence="4">
    <location>
        <begin position="150"/>
        <end position="158"/>
    </location>
</feature>
<feature type="strand" evidence="4">
    <location>
        <begin position="165"/>
        <end position="170"/>
    </location>
</feature>
<feature type="helix" evidence="4">
    <location>
        <begin position="173"/>
        <end position="175"/>
    </location>
</feature>
<feature type="helix" evidence="4">
    <location>
        <begin position="176"/>
        <end position="189"/>
    </location>
</feature>
<feature type="strand" evidence="4">
    <location>
        <begin position="195"/>
        <end position="202"/>
    </location>
</feature>
<feature type="helix" evidence="4">
    <location>
        <begin position="204"/>
        <end position="206"/>
    </location>
</feature>
<feature type="strand" evidence="4">
    <location>
        <begin position="213"/>
        <end position="215"/>
    </location>
</feature>
<feature type="helix" evidence="4">
    <location>
        <begin position="217"/>
        <end position="224"/>
    </location>
</feature>
<feature type="strand" evidence="4">
    <location>
        <begin position="228"/>
        <end position="237"/>
    </location>
</feature>
<feature type="strand" evidence="4">
    <location>
        <begin position="246"/>
        <end position="255"/>
    </location>
</feature>
<feature type="strand" evidence="4">
    <location>
        <begin position="262"/>
        <end position="267"/>
    </location>
</feature>
<feature type="strand" evidence="4">
    <location>
        <begin position="269"/>
        <end position="276"/>
    </location>
</feature>
<feature type="helix" evidence="4">
    <location>
        <begin position="280"/>
        <end position="295"/>
    </location>
</feature>
<feature type="helix" evidence="4">
    <location>
        <begin position="297"/>
        <end position="299"/>
    </location>
</feature>
<feature type="helix" evidence="4">
    <location>
        <begin position="308"/>
        <end position="310"/>
    </location>
</feature>
<feature type="strand" evidence="4">
    <location>
        <begin position="311"/>
        <end position="315"/>
    </location>
</feature>
<feature type="helix" evidence="4">
    <location>
        <begin position="320"/>
        <end position="330"/>
    </location>
</feature>
<feature type="turn" evidence="4">
    <location>
        <begin position="334"/>
        <end position="337"/>
    </location>
</feature>
<feature type="helix" evidence="4">
    <location>
        <begin position="338"/>
        <end position="347"/>
    </location>
</feature>
<feature type="helix" evidence="4">
    <location>
        <begin position="351"/>
        <end position="353"/>
    </location>
</feature>
<feature type="helix" evidence="4">
    <location>
        <begin position="354"/>
        <end position="364"/>
    </location>
</feature>
<feature type="strand" evidence="4">
    <location>
        <begin position="378"/>
        <end position="385"/>
    </location>
</feature>
<feature type="turn" evidence="4">
    <location>
        <begin position="386"/>
        <end position="388"/>
    </location>
</feature>
<feature type="strand" evidence="4">
    <location>
        <begin position="389"/>
        <end position="397"/>
    </location>
</feature>